<organism>
    <name type="scientific">Neurospora crassa (strain ATCC 24698 / 74-OR23-1A / CBS 708.71 / DSM 1257 / FGSC 987)</name>
    <dbReference type="NCBI Taxonomy" id="367110"/>
    <lineage>
        <taxon>Eukaryota</taxon>
        <taxon>Fungi</taxon>
        <taxon>Dikarya</taxon>
        <taxon>Ascomycota</taxon>
        <taxon>Pezizomycotina</taxon>
        <taxon>Sordariomycetes</taxon>
        <taxon>Sordariomycetidae</taxon>
        <taxon>Sordariales</taxon>
        <taxon>Sordariaceae</taxon>
        <taxon>Neurospora</taxon>
    </lineage>
</organism>
<feature type="chain" id="PRO_0000096881" description="Nitrogen metabolite repression protein nmr">
    <location>
        <begin position="1"/>
        <end position="488"/>
    </location>
</feature>
<feature type="region of interest" description="Disordered" evidence="3">
    <location>
        <begin position="1"/>
        <end position="45"/>
    </location>
</feature>
<feature type="region of interest" description="Dispensable for NMR function">
    <location>
        <begin position="412"/>
        <end position="488"/>
    </location>
</feature>
<feature type="region of interest" description="Disordered" evidence="3">
    <location>
        <begin position="422"/>
        <end position="488"/>
    </location>
</feature>
<feature type="compositionally biased region" description="Basic and acidic residues" evidence="3">
    <location>
        <begin position="14"/>
        <end position="29"/>
    </location>
</feature>
<feature type="compositionally biased region" description="Polar residues" evidence="3">
    <location>
        <begin position="36"/>
        <end position="45"/>
    </location>
</feature>
<feature type="compositionally biased region" description="Low complexity" evidence="3">
    <location>
        <begin position="438"/>
        <end position="459"/>
    </location>
</feature>
<feature type="compositionally biased region" description="Acidic residues" evidence="3">
    <location>
        <begin position="460"/>
        <end position="473"/>
    </location>
</feature>
<feature type="binding site" evidence="2">
    <location>
        <begin position="71"/>
        <end position="76"/>
    </location>
    <ligand>
        <name>NADP(+)</name>
        <dbReference type="ChEBI" id="CHEBI:58349"/>
    </ligand>
</feature>
<feature type="binding site" evidence="2">
    <location>
        <begin position="75"/>
        <end position="76"/>
    </location>
    <ligand>
        <name>NAD(+)</name>
        <dbReference type="ChEBI" id="CHEBI:57540"/>
    </ligand>
</feature>
<feature type="binding site" evidence="2">
    <location>
        <begin position="165"/>
        <end position="167"/>
    </location>
    <ligand>
        <name>NAD(+)</name>
        <dbReference type="ChEBI" id="CHEBI:57540"/>
    </ligand>
</feature>
<feature type="binding site" evidence="2">
    <location>
        <position position="165"/>
    </location>
    <ligand>
        <name>NADP(+)</name>
        <dbReference type="ChEBI" id="CHEBI:58349"/>
    </ligand>
</feature>
<feature type="binding site" evidence="2">
    <location>
        <position position="215"/>
    </location>
    <ligand>
        <name>NAD(+)</name>
        <dbReference type="ChEBI" id="CHEBI:57540"/>
    </ligand>
</feature>
<feature type="binding site" evidence="2">
    <location>
        <position position="215"/>
    </location>
    <ligand>
        <name>NADP(+)</name>
        <dbReference type="ChEBI" id="CHEBI:58349"/>
    </ligand>
</feature>
<feature type="binding site" evidence="2">
    <location>
        <begin position="237"/>
        <end position="240"/>
    </location>
    <ligand>
        <name>NAD(+)</name>
        <dbReference type="ChEBI" id="CHEBI:57540"/>
    </ligand>
</feature>
<feature type="binding site" evidence="2">
    <location>
        <begin position="237"/>
        <end position="240"/>
    </location>
    <ligand>
        <name>NADP(+)</name>
        <dbReference type="ChEBI" id="CHEBI:58349"/>
    </ligand>
</feature>
<feature type="mutagenesis site" description="Loss of function." evidence="4">
    <original>P</original>
    <variation>K</variation>
    <location>
        <position position="2"/>
    </location>
</feature>
<feature type="mutagenesis site" description="Few, very slowly growing transformants." evidence="4">
    <original>G</original>
    <variation>C</variation>
    <variation>S</variation>
    <location>
        <position position="386"/>
    </location>
</feature>
<feature type="mutagenesis site" description="Loss of function." evidence="4">
    <original>G</original>
    <variation>D</variation>
    <variation>R</variation>
    <location>
        <position position="386"/>
    </location>
</feature>
<feature type="sequence conflict" description="In Ref. 1; CAC28734." evidence="6" ref="1">
    <original>G</original>
    <variation>R</variation>
    <location>
        <position position="322"/>
    </location>
</feature>
<feature type="sequence conflict" description="In Ref. 1; CAC28734." evidence="6" ref="1">
    <original>C</original>
    <variation>S</variation>
    <location>
        <position position="376"/>
    </location>
</feature>
<feature type="sequence conflict" description="In Ref. 1; CAC28734." evidence="6" ref="1">
    <original>A</original>
    <variation>R</variation>
    <location>
        <position position="404"/>
    </location>
</feature>
<protein>
    <recommendedName>
        <fullName>Nitrogen metabolite repression protein nmr</fullName>
    </recommendedName>
    <alternativeName>
        <fullName>Negative-acting nitrogen regulatory protein nmr</fullName>
    </alternativeName>
    <alternativeName>
        <fullName>Nitrogen metabolite regulation protein</fullName>
        <shortName>NMR</shortName>
    </alternativeName>
</protein>
<gene>
    <name type="primary">nmr</name>
    <name type="ORF">B7A16.230</name>
    <name type="ORF">NCU04158</name>
</gene>
<evidence type="ECO:0000250" key="1"/>
<evidence type="ECO:0000250" key="2">
    <source>
        <dbReference type="UniProtKB" id="Q5AU62"/>
    </source>
</evidence>
<evidence type="ECO:0000256" key="3">
    <source>
        <dbReference type="SAM" id="MobiDB-lite"/>
    </source>
</evidence>
<evidence type="ECO:0000269" key="4">
    <source>
    </source>
</evidence>
<evidence type="ECO:0000269" key="5">
    <source>
    </source>
</evidence>
<evidence type="ECO:0000305" key="6"/>
<name>NMR1_NEUCR</name>
<dbReference type="EMBL" id="AL513445">
    <property type="protein sequence ID" value="CAC28734.1"/>
    <property type="molecule type" value="Genomic_DNA"/>
</dbReference>
<dbReference type="EMBL" id="CM002240">
    <property type="protein sequence ID" value="EAA32078.3"/>
    <property type="molecule type" value="Genomic_DNA"/>
</dbReference>
<dbReference type="EMBL" id="S64286">
    <property type="protein sequence ID" value="AAB20268.2"/>
    <property type="molecule type" value="Genomic_DNA"/>
</dbReference>
<dbReference type="PIR" id="S11910">
    <property type="entry name" value="S11910"/>
</dbReference>
<dbReference type="PIR" id="T46600">
    <property type="entry name" value="T46600"/>
</dbReference>
<dbReference type="RefSeq" id="XP_961314.3">
    <property type="nucleotide sequence ID" value="XM_956221.3"/>
</dbReference>
<dbReference type="SMR" id="P23762"/>
<dbReference type="STRING" id="367110.P23762"/>
<dbReference type="PaxDb" id="5141-EFNCRP00000003932"/>
<dbReference type="EnsemblFungi" id="EAA32078">
    <property type="protein sequence ID" value="EAA32078"/>
    <property type="gene ID" value="NCU04158"/>
</dbReference>
<dbReference type="GeneID" id="3877421"/>
<dbReference type="KEGG" id="ncr:NCU04158"/>
<dbReference type="VEuPathDB" id="FungiDB:NCU04158"/>
<dbReference type="HOGENOM" id="CLU_027360_0_0_1"/>
<dbReference type="InParanoid" id="P23762"/>
<dbReference type="OrthoDB" id="5356836at2759"/>
<dbReference type="Proteomes" id="UP000001805">
    <property type="component" value="Chromosome 2, Linkage Group V"/>
</dbReference>
<dbReference type="GO" id="GO:0005634">
    <property type="term" value="C:nucleus"/>
    <property type="evidence" value="ECO:0000318"/>
    <property type="project" value="GO_Central"/>
</dbReference>
<dbReference type="Gene3D" id="3.40.50.720">
    <property type="entry name" value="NAD(P)-binding Rossmann-like Domain"/>
    <property type="match status" value="1"/>
</dbReference>
<dbReference type="Gene3D" id="3.90.25.10">
    <property type="entry name" value="UDP-galactose 4-epimerase, domain 1"/>
    <property type="match status" value="1"/>
</dbReference>
<dbReference type="InterPro" id="IPR036291">
    <property type="entry name" value="NAD(P)-bd_dom_sf"/>
</dbReference>
<dbReference type="InterPro" id="IPR008030">
    <property type="entry name" value="NmrA-like"/>
</dbReference>
<dbReference type="InterPro" id="IPR051164">
    <property type="entry name" value="NmrA-like_oxidored"/>
</dbReference>
<dbReference type="PANTHER" id="PTHR42748:SF5">
    <property type="entry name" value="NITROGEN METABOLITE REPRESSION PROTEIN NMRA"/>
    <property type="match status" value="1"/>
</dbReference>
<dbReference type="PANTHER" id="PTHR42748">
    <property type="entry name" value="NITROGEN METABOLITE REPRESSION PROTEIN NMRA FAMILY MEMBER"/>
    <property type="match status" value="1"/>
</dbReference>
<dbReference type="Pfam" id="PF05368">
    <property type="entry name" value="NmrA"/>
    <property type="match status" value="1"/>
</dbReference>
<dbReference type="SUPFAM" id="SSF51735">
    <property type="entry name" value="NAD(P)-binding Rossmann-fold domains"/>
    <property type="match status" value="1"/>
</dbReference>
<proteinExistence type="evidence at protein level"/>
<reference key="1">
    <citation type="journal article" date="1990" name="Mol. Gen. Genet.">
        <title>Nucleotide sequence and analysis of NMR, a negative-acting regulatory gene in the nitrogen circuit of Neurospora crassa.</title>
        <authorList>
            <person name="Young J.L."/>
            <person name="Jarai G."/>
            <person name="Fu Y.-H."/>
            <person name="Marzluf G.A."/>
        </authorList>
    </citation>
    <scope>NUCLEOTIDE SEQUENCE [GENOMIC DNA]</scope>
    <source>
        <strain>ATCC 24698 / 74-OR23-1A / CBS 708.71 / DSM 1257 / FGSC 987</strain>
    </source>
</reference>
<reference key="2">
    <citation type="journal article" date="2003" name="Nucleic Acids Res.">
        <title>What's in the genome of a filamentous fungus? Analysis of the Neurospora genome sequence.</title>
        <authorList>
            <person name="Mannhaupt G."/>
            <person name="Montrone C."/>
            <person name="Haase D."/>
            <person name="Mewes H.-W."/>
            <person name="Aign V."/>
            <person name="Hoheisel J.D."/>
            <person name="Fartmann B."/>
            <person name="Nyakatura G."/>
            <person name="Kempken F."/>
            <person name="Maier J."/>
            <person name="Schulte U."/>
        </authorList>
    </citation>
    <scope>NUCLEOTIDE SEQUENCE [LARGE SCALE GENOMIC DNA]</scope>
    <source>
        <strain>ATCC 24698 / 74-OR23-1A / CBS 708.71 / DSM 1257 / FGSC 987</strain>
    </source>
</reference>
<reference key="3">
    <citation type="journal article" date="2003" name="Nature">
        <title>The genome sequence of the filamentous fungus Neurospora crassa.</title>
        <authorList>
            <person name="Galagan J.E."/>
            <person name="Calvo S.E."/>
            <person name="Borkovich K.A."/>
            <person name="Selker E.U."/>
            <person name="Read N.D."/>
            <person name="Jaffe D.B."/>
            <person name="FitzHugh W."/>
            <person name="Ma L.-J."/>
            <person name="Smirnov S."/>
            <person name="Purcell S."/>
            <person name="Rehman B."/>
            <person name="Elkins T."/>
            <person name="Engels R."/>
            <person name="Wang S."/>
            <person name="Nielsen C.B."/>
            <person name="Butler J."/>
            <person name="Endrizzi M."/>
            <person name="Qui D."/>
            <person name="Ianakiev P."/>
            <person name="Bell-Pedersen D."/>
            <person name="Nelson M.A."/>
            <person name="Werner-Washburne M."/>
            <person name="Selitrennikoff C.P."/>
            <person name="Kinsey J.A."/>
            <person name="Braun E.L."/>
            <person name="Zelter A."/>
            <person name="Schulte U."/>
            <person name="Kothe G.O."/>
            <person name="Jedd G."/>
            <person name="Mewes H.-W."/>
            <person name="Staben C."/>
            <person name="Marcotte E."/>
            <person name="Greenberg D."/>
            <person name="Roy A."/>
            <person name="Foley K."/>
            <person name="Naylor J."/>
            <person name="Stange-Thomann N."/>
            <person name="Barrett R."/>
            <person name="Gnerre S."/>
            <person name="Kamal M."/>
            <person name="Kamvysselis M."/>
            <person name="Mauceli E.W."/>
            <person name="Bielke C."/>
            <person name="Rudd S."/>
            <person name="Frishman D."/>
            <person name="Krystofova S."/>
            <person name="Rasmussen C."/>
            <person name="Metzenberg R.L."/>
            <person name="Perkins D.D."/>
            <person name="Kroken S."/>
            <person name="Cogoni C."/>
            <person name="Macino G."/>
            <person name="Catcheside D.E.A."/>
            <person name="Li W."/>
            <person name="Pratt R.J."/>
            <person name="Osmani S.A."/>
            <person name="DeSouza C.P.C."/>
            <person name="Glass N.L."/>
            <person name="Orbach M.J."/>
            <person name="Berglund J.A."/>
            <person name="Voelker R."/>
            <person name="Yarden O."/>
            <person name="Plamann M."/>
            <person name="Seiler S."/>
            <person name="Dunlap J.C."/>
            <person name="Radford A."/>
            <person name="Aramayo R."/>
            <person name="Natvig D.O."/>
            <person name="Alex L.A."/>
            <person name="Mannhaupt G."/>
            <person name="Ebbole D.J."/>
            <person name="Freitag M."/>
            <person name="Paulsen I."/>
            <person name="Sachs M.S."/>
            <person name="Lander E.S."/>
            <person name="Nusbaum C."/>
            <person name="Birren B.W."/>
        </authorList>
    </citation>
    <scope>NUCLEOTIDE SEQUENCE [LARGE SCALE GENOMIC DNA]</scope>
    <source>
        <strain>ATCC 24698 / 74-OR23-1A / CBS 708.71 / DSM 1257 / FGSC 987</strain>
    </source>
</reference>
<reference key="4">
    <citation type="journal article" date="1991" name="Curr. Genet.">
        <title>Generation of new mutants of nmr, the negative-acting nitrogen regulatory gene of Neurospora crassa, by repeat induced mutation.</title>
        <authorList>
            <person name="Jarai G."/>
            <person name="Marzluf G.A."/>
        </authorList>
    </citation>
    <scope>NUCLEOTIDE SEQUENCE [GENOMIC DNA] OF 99-310</scope>
</reference>
<reference key="5">
    <citation type="journal article" date="1990" name="Mol. Gen. Genet.">
        <title>Analysis of conventional and in vitro generated mutants of nmr, the negatively acting nitrogen regulatory gene of Neurospora crassa.</title>
        <authorList>
            <person name="Jarai G."/>
            <person name="Marzluf G.A."/>
        </authorList>
    </citation>
    <scope>MUTAGENESIS</scope>
    <source>
        <strain>ATCC 24698 / 74-OR23-1A / CBS 708.71 / DSM 1257 / FGSC 987</strain>
    </source>
</reference>
<reference key="6">
    <citation type="journal article" date="1995" name="Biochemistry">
        <title>The negative-acting NMR regulatory protein of Neurospora crassa binds to and inhibits the DNA-binding activity of the positive-acting nitrogen regulatory protein NIT2.</title>
        <authorList>
            <person name="Xiao X."/>
            <person name="Fu Y.H."/>
            <person name="Marzluf G.A."/>
        </authorList>
    </citation>
    <scope>INTERACTION WITH NIT-2</scope>
</reference>
<accession>P23762</accession>
<accession>Q1K7K4</accession>
<accession>Q9C226</accession>
<keyword id="KW-0520">NAD</keyword>
<keyword id="KW-0521">NADP</keyword>
<keyword id="KW-0539">Nucleus</keyword>
<keyword id="KW-1185">Reference proteome</keyword>
<keyword id="KW-0678">Repressor</keyword>
<keyword id="KW-0804">Transcription</keyword>
<keyword id="KW-0805">Transcription regulation</keyword>
<comment type="function">
    <text evidence="1">May be a redox sensor protein. Negative transcriptional regulator involved in the post-transcriptional modulation of the GATA-type transcription factor nit-2, forming part of a system controlling nitrogen metabolite repression (By similarity).</text>
</comment>
<comment type="subunit">
    <text evidence="5">Interacts with nit-2.</text>
</comment>
<comment type="subcellular location">
    <subcellularLocation>
        <location evidence="6">Nucleus</location>
    </subcellularLocation>
</comment>
<comment type="similarity">
    <text evidence="6">Belongs to the NmrA-type oxidoreductase family.</text>
</comment>
<comment type="caution">
    <text evidence="6">Lacks the conserved Tyr residue in position 211 in the active site triad of Ser-Tyr-Lys necessary for dehydrogenase activity, suggesting that it has no oxidoreductase activity.</text>
</comment>
<sequence length="488" mass="54689">MPAEILSELPLRPAPRDIKIPNAMHNEERRHKHSRSSYSEMSPLMSRNNSLTWRPAKRPMPTPDKTIAVINAAGRQAASFIRVATAVGFHVRAQMRNLEGVVATEVSTNPNVTVLQGELYTKETPAESDKGQCVDVTKNGPISGIGVNDALISELFRGAQLAFINTTFYGDEERIGMALADAAKKAGVQHYVYSSMPDHHAYNKDWPSLPLWASKHRVEDYVKEIGIPATFVYTGIYNNNFTSLPYPLFCTDLQPDGSWIWQAPFHPNAKLPWLDAEHDVGPAILQIFKDGVKKWGGGKRIALAYEMLTPLEACEVFSRGVGRPVRYVRGPIEVKVKIPEGYRIQLEALEELFNLHNEDPEKQPPYFGDIELERSCPRAALELWEGPRGLEEYAREVFPLEEQANGLTWMIEEYDGGGGNNIGNNHNNHHQQEEHYQHQNGHQNGHNGINGHIVNGGVDSESEEEDSDSDDEGLVMRGNKRADEEWLA</sequence>